<protein>
    <recommendedName>
        <fullName evidence="6">Kinesin-like protein KIN-7K, chloroplastic</fullName>
    </recommendedName>
</protein>
<keyword id="KW-0067">ATP-binding</keyword>
<keyword id="KW-0150">Chloroplast</keyword>
<keyword id="KW-0175">Coiled coil</keyword>
<keyword id="KW-0479">Metal-binding</keyword>
<keyword id="KW-0493">Microtubule</keyword>
<keyword id="KW-0505">Motor protein</keyword>
<keyword id="KW-0547">Nucleotide-binding</keyword>
<keyword id="KW-0934">Plastid</keyword>
<keyword id="KW-1185">Reference proteome</keyword>
<keyword id="KW-0809">Transit peptide</keyword>
<keyword id="KW-0862">Zinc</keyword>
<keyword id="KW-0863">Zinc-finger</keyword>
<reference key="1">
    <citation type="journal article" date="2003" name="Science">
        <title>In-depth view of structure, activity, and evolution of rice chromosome 10.</title>
        <authorList>
            <person name="Yu Y."/>
            <person name="Rambo T."/>
            <person name="Currie J."/>
            <person name="Saski C."/>
            <person name="Kim H.-R."/>
            <person name="Collura K."/>
            <person name="Thompson S."/>
            <person name="Simmons J."/>
            <person name="Yang T.-J."/>
            <person name="Nah G."/>
            <person name="Patel A.J."/>
            <person name="Thurmond S."/>
            <person name="Henry D."/>
            <person name="Oates R."/>
            <person name="Palmer M."/>
            <person name="Pries G."/>
            <person name="Gibson J."/>
            <person name="Anderson H."/>
            <person name="Paradkar M."/>
            <person name="Crane L."/>
            <person name="Dale J."/>
            <person name="Carver M.B."/>
            <person name="Wood T."/>
            <person name="Frisch D."/>
            <person name="Engler F."/>
            <person name="Soderlund C."/>
            <person name="Palmer L.E."/>
            <person name="Teytelman L."/>
            <person name="Nascimento L."/>
            <person name="De la Bastide M."/>
            <person name="Spiegel L."/>
            <person name="Ware D."/>
            <person name="O'Shaughnessy A."/>
            <person name="Dike S."/>
            <person name="Dedhia N."/>
            <person name="Preston R."/>
            <person name="Huang E."/>
            <person name="Ferraro K."/>
            <person name="Kuit K."/>
            <person name="Miller B."/>
            <person name="Zutavern T."/>
            <person name="Katzenberger F."/>
            <person name="Muller S."/>
            <person name="Balija V."/>
            <person name="Martienssen R.A."/>
            <person name="Stein L."/>
            <person name="Minx P."/>
            <person name="Johnson D."/>
            <person name="Cordum H."/>
            <person name="Mardis E."/>
            <person name="Cheng Z."/>
            <person name="Jiang J."/>
            <person name="Wilson R."/>
            <person name="McCombie W.R."/>
            <person name="Wing R.A."/>
            <person name="Yuan Q."/>
            <person name="Ouyang S."/>
            <person name="Liu J."/>
            <person name="Jones K.M."/>
            <person name="Gansberger K."/>
            <person name="Moffat K."/>
            <person name="Hill J."/>
            <person name="Tsitrin T."/>
            <person name="Overton L."/>
            <person name="Bera J."/>
            <person name="Kim M."/>
            <person name="Jin S."/>
            <person name="Tallon L."/>
            <person name="Ciecko A."/>
            <person name="Pai G."/>
            <person name="Van Aken S."/>
            <person name="Utterback T."/>
            <person name="Reidmuller S."/>
            <person name="Bormann J."/>
            <person name="Feldblyum T."/>
            <person name="Hsiao J."/>
            <person name="Zismann V."/>
            <person name="Blunt S."/>
            <person name="de Vazeille A.R."/>
            <person name="Shaffer T."/>
            <person name="Koo H."/>
            <person name="Suh B."/>
            <person name="Yang Q."/>
            <person name="Haas B."/>
            <person name="Peterson J."/>
            <person name="Pertea M."/>
            <person name="Volfovsky N."/>
            <person name="Wortman J."/>
            <person name="White O."/>
            <person name="Salzberg S.L."/>
            <person name="Fraser C.M."/>
            <person name="Buell C.R."/>
            <person name="Messing J."/>
            <person name="Song R."/>
            <person name="Fuks G."/>
            <person name="Llaca V."/>
            <person name="Kovchak S."/>
            <person name="Young S."/>
            <person name="Bowers J.E."/>
            <person name="Paterson A.H."/>
            <person name="Johns M.A."/>
            <person name="Mao L."/>
            <person name="Pan H."/>
            <person name="Dean R.A."/>
        </authorList>
    </citation>
    <scope>NUCLEOTIDE SEQUENCE [LARGE SCALE GENOMIC DNA]</scope>
    <source>
        <strain>cv. Nipponbare</strain>
    </source>
</reference>
<reference key="2">
    <citation type="journal article" date="2005" name="Nature">
        <title>The map-based sequence of the rice genome.</title>
        <authorList>
            <consortium name="International rice genome sequencing project (IRGSP)"/>
        </authorList>
    </citation>
    <scope>NUCLEOTIDE SEQUENCE [LARGE SCALE GENOMIC DNA]</scope>
    <source>
        <strain>cv. Nipponbare</strain>
    </source>
</reference>
<reference key="3">
    <citation type="journal article" date="2008" name="Nucleic Acids Res.">
        <title>The rice annotation project database (RAP-DB): 2008 update.</title>
        <authorList>
            <consortium name="The rice annotation project (RAP)"/>
        </authorList>
    </citation>
    <scope>GENOME REANNOTATION</scope>
    <source>
        <strain>cv. Nipponbare</strain>
    </source>
</reference>
<reference key="4">
    <citation type="journal article" date="2013" name="Rice">
        <title>Improvement of the Oryza sativa Nipponbare reference genome using next generation sequence and optical map data.</title>
        <authorList>
            <person name="Kawahara Y."/>
            <person name="de la Bastide M."/>
            <person name="Hamilton J.P."/>
            <person name="Kanamori H."/>
            <person name="McCombie W.R."/>
            <person name="Ouyang S."/>
            <person name="Schwartz D.C."/>
            <person name="Tanaka T."/>
            <person name="Wu J."/>
            <person name="Zhou S."/>
            <person name="Childs K.L."/>
            <person name="Davidson R.M."/>
            <person name="Lin H."/>
            <person name="Quesada-Ocampo L."/>
            <person name="Vaillancourt B."/>
            <person name="Sakai H."/>
            <person name="Lee S.S."/>
            <person name="Kim J."/>
            <person name="Numa H."/>
            <person name="Itoh T."/>
            <person name="Buell C.R."/>
            <person name="Matsumoto T."/>
        </authorList>
    </citation>
    <scope>GENOME REANNOTATION</scope>
    <source>
        <strain>cv. Nipponbare</strain>
    </source>
</reference>
<reference key="5">
    <citation type="journal article" date="2005" name="PLoS Biol.">
        <title>The genomes of Oryza sativa: a history of duplications.</title>
        <authorList>
            <person name="Yu J."/>
            <person name="Wang J."/>
            <person name="Lin W."/>
            <person name="Li S."/>
            <person name="Li H."/>
            <person name="Zhou J."/>
            <person name="Ni P."/>
            <person name="Dong W."/>
            <person name="Hu S."/>
            <person name="Zeng C."/>
            <person name="Zhang J."/>
            <person name="Zhang Y."/>
            <person name="Li R."/>
            <person name="Xu Z."/>
            <person name="Li S."/>
            <person name="Li X."/>
            <person name="Zheng H."/>
            <person name="Cong L."/>
            <person name="Lin L."/>
            <person name="Yin J."/>
            <person name="Geng J."/>
            <person name="Li G."/>
            <person name="Shi J."/>
            <person name="Liu J."/>
            <person name="Lv H."/>
            <person name="Li J."/>
            <person name="Wang J."/>
            <person name="Deng Y."/>
            <person name="Ran L."/>
            <person name="Shi X."/>
            <person name="Wang X."/>
            <person name="Wu Q."/>
            <person name="Li C."/>
            <person name="Ren X."/>
            <person name="Wang J."/>
            <person name="Wang X."/>
            <person name="Li D."/>
            <person name="Liu D."/>
            <person name="Zhang X."/>
            <person name="Ji Z."/>
            <person name="Zhao W."/>
            <person name="Sun Y."/>
            <person name="Zhang Z."/>
            <person name="Bao J."/>
            <person name="Han Y."/>
            <person name="Dong L."/>
            <person name="Ji J."/>
            <person name="Chen P."/>
            <person name="Wu S."/>
            <person name="Liu J."/>
            <person name="Xiao Y."/>
            <person name="Bu D."/>
            <person name="Tan J."/>
            <person name="Yang L."/>
            <person name="Ye C."/>
            <person name="Zhang J."/>
            <person name="Xu J."/>
            <person name="Zhou Y."/>
            <person name="Yu Y."/>
            <person name="Zhang B."/>
            <person name="Zhuang S."/>
            <person name="Wei H."/>
            <person name="Liu B."/>
            <person name="Lei M."/>
            <person name="Yu H."/>
            <person name="Li Y."/>
            <person name="Xu H."/>
            <person name="Wei S."/>
            <person name="He X."/>
            <person name="Fang L."/>
            <person name="Zhang Z."/>
            <person name="Zhang Y."/>
            <person name="Huang X."/>
            <person name="Su Z."/>
            <person name="Tong W."/>
            <person name="Li J."/>
            <person name="Tong Z."/>
            <person name="Li S."/>
            <person name="Ye J."/>
            <person name="Wang L."/>
            <person name="Fang L."/>
            <person name="Lei T."/>
            <person name="Chen C.-S."/>
            <person name="Chen H.-C."/>
            <person name="Xu Z."/>
            <person name="Li H."/>
            <person name="Huang H."/>
            <person name="Zhang F."/>
            <person name="Xu H."/>
            <person name="Li N."/>
            <person name="Zhao C."/>
            <person name="Li S."/>
            <person name="Dong L."/>
            <person name="Huang Y."/>
            <person name="Li L."/>
            <person name="Xi Y."/>
            <person name="Qi Q."/>
            <person name="Li W."/>
            <person name="Zhang B."/>
            <person name="Hu W."/>
            <person name="Zhang Y."/>
            <person name="Tian X."/>
            <person name="Jiao Y."/>
            <person name="Liang X."/>
            <person name="Jin J."/>
            <person name="Gao L."/>
            <person name="Zheng W."/>
            <person name="Hao B."/>
            <person name="Liu S.-M."/>
            <person name="Wang W."/>
            <person name="Yuan L."/>
            <person name="Cao M."/>
            <person name="McDermott J."/>
            <person name="Samudrala R."/>
            <person name="Wang J."/>
            <person name="Wong G.K.-S."/>
            <person name="Yang H."/>
        </authorList>
    </citation>
    <scope>NUCLEOTIDE SEQUENCE [LARGE SCALE GENOMIC DNA]</scope>
    <source>
        <strain>cv. Nipponbare</strain>
    </source>
</reference>
<reference key="6">
    <citation type="submission" date="2006-10" db="EMBL/GenBank/DDBJ databases">
        <title>Oryza sativa full length cDNA.</title>
        <authorList>
            <consortium name="The rice full-length cDNA consortium"/>
        </authorList>
    </citation>
    <scope>NUCLEOTIDE SEQUENCE [LARGE SCALE MRNA]</scope>
    <source>
        <strain>cv. Nipponbare</strain>
    </source>
</reference>
<reference key="7">
    <citation type="journal article" date="2009" name="Ann. Bot.">
        <title>Evaluating the microtubule cytoskeleton and its interacting proteins in monocots by mining the rice genome.</title>
        <authorList>
            <person name="Guo L."/>
            <person name="Ho C.M."/>
            <person name="Kong Z."/>
            <person name="Lee Y.R."/>
            <person name="Qian Q."/>
            <person name="Liu B."/>
        </authorList>
    </citation>
    <scope>GENE FAMILY</scope>
    <scope>NOMENCLATURE</scope>
</reference>
<proteinExistence type="evidence at transcript level"/>
<comment type="subcellular location">
    <subcellularLocation>
        <location evidence="1">Plastid</location>
        <location evidence="1">Chloroplast</location>
    </subcellularLocation>
</comment>
<comment type="similarity">
    <text evidence="5">Belongs to the TRAFAC class myosin-kinesin ATPase superfamily. Kinesin family. KIN-7 subfamily.</text>
</comment>
<comment type="sequence caution" evidence="6">
    <conflict type="erroneous gene model prediction">
        <sequence resource="EMBL-CDS" id="AAG13527"/>
    </conflict>
</comment>
<comment type="sequence caution" evidence="6">
    <conflict type="erroneous gene model prediction">
        <sequence resource="EMBL-CDS" id="AAP54589"/>
    </conflict>
</comment>
<comment type="sequence caution" evidence="6">
    <conflict type="frameshift">
        <sequence resource="EMBL-CDS" id="AAP54589"/>
    </conflict>
</comment>
<comment type="sequence caution" evidence="6">
    <conflict type="erroneous gene model prediction">
        <sequence resource="EMBL-CDS" id="EAZ16667"/>
    </conflict>
</comment>
<organism>
    <name type="scientific">Oryza sativa subsp. japonica</name>
    <name type="common">Rice</name>
    <dbReference type="NCBI Taxonomy" id="39947"/>
    <lineage>
        <taxon>Eukaryota</taxon>
        <taxon>Viridiplantae</taxon>
        <taxon>Streptophyta</taxon>
        <taxon>Embryophyta</taxon>
        <taxon>Tracheophyta</taxon>
        <taxon>Spermatophyta</taxon>
        <taxon>Magnoliopsida</taxon>
        <taxon>Liliopsida</taxon>
        <taxon>Poales</taxon>
        <taxon>Poaceae</taxon>
        <taxon>BOP clade</taxon>
        <taxon>Oryzoideae</taxon>
        <taxon>Oryzeae</taxon>
        <taxon>Oryzinae</taxon>
        <taxon>Oryza</taxon>
        <taxon>Oryza sativa</taxon>
    </lineage>
</organism>
<gene>
    <name evidence="6" type="primary">KIN7K</name>
    <name evidence="9" type="ordered locus">Os10g0512800</name>
    <name evidence="8" type="ordered locus">LOC_Os10g36880</name>
    <name evidence="10" type="ORF">OsJ_32142</name>
    <name evidence="7" type="ORF">OSJNBa0026L12.18</name>
</gene>
<sequence>MSSRPSSSASSRRSSSPFSAGSRRPPTSSSSSAGSYLTGRLMPRSYSTASSVSSSSHFFGGGGGSGGGSRSTTPGRRGSSSSSLVGPVPSPPSPVPFPSAEELVIEDTSRSGDSISVTIRFRPLSEREIQRGDEISWYADGERLVRCEYNPATAYGYDRVFGPKTTTEAVYDVAARPVVKGAMEGINGTVFAYGVTSSGKTHTMHGDQNCPGIIPLAIKDVFSLIQDTPGREFLLRVSYLEIYNEVINDLLDPTGQNLRVREDAQGTYVEGIKEEVVLSPGHALSFIAAGEEHRHVGSNNFNLFSSRSHTIFTLMIESSAHGDEYDGVMYSQLNLIDLAGSESSKTETTGLRRREGSYINKSLLTLGTVIGKLSEGRATHIPYRDSKLTRLLQSSLSGHGHVSLICTITPASSNMEETHNTLKFASRAKRVEIYAARNRMIDEKSLIKKYQREISSLKQELDQLRRGLIGGASQEEIMILRQQLEEGQVKMQSRLEEEEEAKAALMSRIQRLTKLILVSTKNNIPALTDTSSHQRHNSVNEEDKVSTSQDSSMLVQNDSATKDSLSSASPDAVDEINQLRCASGDHSSIAGSGPDEMQGGITASDQMDLLIEQVKMLAGEIAFGTSSLKRLIEQSIEDPEGTKNQIDNLEREIREKRRHMRALEQKLMESGEASVANASMMDMQQTITKLTAQCSEKAFELELRSADNRVLQEQLQQKNVEINELQEKVLRLEQQLTTNTEASPEQCTEHELHDLKSKLQLKEAESEKLKYEHMKITEENRELVNQNSTLCEEVAYAKELASSAAVELKNLAEEVTKLSVQNAKQAKELLIAQELAHSRVPGRKGRSAGRGRDEVGTWSLDLEDMKMELQARKQREAALEAALAEKEHLEEEYKKKFDEAKKKELSLENDLAGMWVLVAKLKRGALGISDLNVDDRSINLADITNGTKENKADKNVAVVEKQLSDNTVKSLTAEEYRNPEFEPLLVRLKAKIQEMKEKETDSLGDKDGNSHVCKVCFESATAAVLLPCRHFCLCKPCSLACSECPLCRTRIADRIITFT</sequence>
<dbReference type="EMBL" id="AC068924">
    <property type="protein sequence ID" value="AAG13527.1"/>
    <property type="status" value="ALT_SEQ"/>
    <property type="molecule type" value="Genomic_DNA"/>
</dbReference>
<dbReference type="EMBL" id="DP000086">
    <property type="protein sequence ID" value="AAP54589.2"/>
    <property type="status" value="ALT_SEQ"/>
    <property type="molecule type" value="Genomic_DNA"/>
</dbReference>
<dbReference type="EMBL" id="AP014966">
    <property type="protein sequence ID" value="BAT11636.1"/>
    <property type="molecule type" value="Genomic_DNA"/>
</dbReference>
<dbReference type="EMBL" id="CM000147">
    <property type="protein sequence ID" value="EAZ16667.1"/>
    <property type="status" value="ALT_SEQ"/>
    <property type="molecule type" value="Genomic_DNA"/>
</dbReference>
<dbReference type="EMBL" id="AK242756">
    <property type="status" value="NOT_ANNOTATED_CDS"/>
    <property type="molecule type" value="mRNA"/>
</dbReference>
<dbReference type="RefSeq" id="XP_015615027.1">
    <property type="nucleotide sequence ID" value="XM_015759541.1"/>
</dbReference>
<dbReference type="SMR" id="Q9FW70"/>
<dbReference type="FunCoup" id="Q9FW70">
    <property type="interactions" value="1158"/>
</dbReference>
<dbReference type="STRING" id="39947.Q9FW70"/>
<dbReference type="iPTMnet" id="Q9FW70"/>
<dbReference type="PaxDb" id="39947-Q9FW70"/>
<dbReference type="EnsemblPlants" id="Os10t0512800-01">
    <property type="protein sequence ID" value="Os10t0512800-01"/>
    <property type="gene ID" value="Os10g0512800"/>
</dbReference>
<dbReference type="Gramene" id="Os10t0512800-01">
    <property type="protein sequence ID" value="Os10t0512800-01"/>
    <property type="gene ID" value="Os10g0512800"/>
</dbReference>
<dbReference type="eggNOG" id="KOG0242">
    <property type="taxonomic scope" value="Eukaryota"/>
</dbReference>
<dbReference type="HOGENOM" id="CLU_004957_0_0_1"/>
<dbReference type="InParanoid" id="Q9FW70"/>
<dbReference type="OMA" id="IGSRSMT"/>
<dbReference type="OrthoDB" id="3176171at2759"/>
<dbReference type="Proteomes" id="UP000000763">
    <property type="component" value="Chromosome 10"/>
</dbReference>
<dbReference type="Proteomes" id="UP000007752">
    <property type="component" value="Chromosome 10"/>
</dbReference>
<dbReference type="Proteomes" id="UP000059680">
    <property type="component" value="Chromosome 10"/>
</dbReference>
<dbReference type="GO" id="GO:0009507">
    <property type="term" value="C:chloroplast"/>
    <property type="evidence" value="ECO:0007669"/>
    <property type="project" value="UniProtKB-SubCell"/>
</dbReference>
<dbReference type="GO" id="GO:0005737">
    <property type="term" value="C:cytoplasm"/>
    <property type="evidence" value="ECO:0000318"/>
    <property type="project" value="GO_Central"/>
</dbReference>
<dbReference type="GO" id="GO:0005871">
    <property type="term" value="C:kinesin complex"/>
    <property type="evidence" value="ECO:0000318"/>
    <property type="project" value="GO_Central"/>
</dbReference>
<dbReference type="GO" id="GO:0005874">
    <property type="term" value="C:microtubule"/>
    <property type="evidence" value="ECO:0000318"/>
    <property type="project" value="GO_Central"/>
</dbReference>
<dbReference type="GO" id="GO:0005524">
    <property type="term" value="F:ATP binding"/>
    <property type="evidence" value="ECO:0007669"/>
    <property type="project" value="UniProtKB-KW"/>
</dbReference>
<dbReference type="GO" id="GO:0016887">
    <property type="term" value="F:ATP hydrolysis activity"/>
    <property type="evidence" value="ECO:0000318"/>
    <property type="project" value="GO_Central"/>
</dbReference>
<dbReference type="GO" id="GO:0008017">
    <property type="term" value="F:microtubule binding"/>
    <property type="evidence" value="ECO:0000318"/>
    <property type="project" value="GO_Central"/>
</dbReference>
<dbReference type="GO" id="GO:0003777">
    <property type="term" value="F:microtubule motor activity"/>
    <property type="evidence" value="ECO:0000318"/>
    <property type="project" value="GO_Central"/>
</dbReference>
<dbReference type="GO" id="GO:0008270">
    <property type="term" value="F:zinc ion binding"/>
    <property type="evidence" value="ECO:0007669"/>
    <property type="project" value="UniProtKB-KW"/>
</dbReference>
<dbReference type="GO" id="GO:0007018">
    <property type="term" value="P:microtubule-based movement"/>
    <property type="evidence" value="ECO:0000318"/>
    <property type="project" value="GO_Central"/>
</dbReference>
<dbReference type="CDD" id="cd01374">
    <property type="entry name" value="KISc_CENP_E"/>
    <property type="match status" value="1"/>
</dbReference>
<dbReference type="CDD" id="cd16649">
    <property type="entry name" value="mRING-HC-C3HC5_CGRF1-like"/>
    <property type="match status" value="1"/>
</dbReference>
<dbReference type="FunFam" id="3.30.40.10:FF:000148">
    <property type="entry name" value="Kinesin-like protein KIN-7D, mitochondrial"/>
    <property type="match status" value="1"/>
</dbReference>
<dbReference type="FunFam" id="3.40.850.10:FF:000014">
    <property type="entry name" value="Kinesin-like protein KIN-7G"/>
    <property type="match status" value="1"/>
</dbReference>
<dbReference type="Gene3D" id="3.40.850.10">
    <property type="entry name" value="Kinesin motor domain"/>
    <property type="match status" value="1"/>
</dbReference>
<dbReference type="Gene3D" id="3.30.40.10">
    <property type="entry name" value="Zinc/RING finger domain, C3HC4 (zinc finger)"/>
    <property type="match status" value="1"/>
</dbReference>
<dbReference type="InterPro" id="IPR027640">
    <property type="entry name" value="Kinesin-like_fam"/>
</dbReference>
<dbReference type="InterPro" id="IPR019821">
    <property type="entry name" value="Kinesin_motor_CS"/>
</dbReference>
<dbReference type="InterPro" id="IPR001752">
    <property type="entry name" value="Kinesin_motor_dom"/>
</dbReference>
<dbReference type="InterPro" id="IPR036961">
    <property type="entry name" value="Kinesin_motor_dom_sf"/>
</dbReference>
<dbReference type="InterPro" id="IPR027417">
    <property type="entry name" value="P-loop_NTPase"/>
</dbReference>
<dbReference type="InterPro" id="IPR001841">
    <property type="entry name" value="Znf_RING"/>
</dbReference>
<dbReference type="InterPro" id="IPR013083">
    <property type="entry name" value="Znf_RING/FYVE/PHD"/>
</dbReference>
<dbReference type="PANTHER" id="PTHR47968">
    <property type="entry name" value="CENTROMERE PROTEIN E"/>
    <property type="match status" value="1"/>
</dbReference>
<dbReference type="PANTHER" id="PTHR47968:SF35">
    <property type="entry name" value="KINESIN-LIKE PROTEIN KIN-7D, MITOCHONDRIAL ISOFORM X1"/>
    <property type="match status" value="1"/>
</dbReference>
<dbReference type="Pfam" id="PF00225">
    <property type="entry name" value="Kinesin"/>
    <property type="match status" value="1"/>
</dbReference>
<dbReference type="Pfam" id="PF13920">
    <property type="entry name" value="zf-C3HC4_3"/>
    <property type="match status" value="1"/>
</dbReference>
<dbReference type="PRINTS" id="PR00380">
    <property type="entry name" value="KINESINHEAVY"/>
</dbReference>
<dbReference type="SMART" id="SM00129">
    <property type="entry name" value="KISc"/>
    <property type="match status" value="1"/>
</dbReference>
<dbReference type="SUPFAM" id="SSF52540">
    <property type="entry name" value="P-loop containing nucleoside triphosphate hydrolases"/>
    <property type="match status" value="1"/>
</dbReference>
<dbReference type="SUPFAM" id="SSF57850">
    <property type="entry name" value="RING/U-box"/>
    <property type="match status" value="1"/>
</dbReference>
<dbReference type="PROSITE" id="PS00411">
    <property type="entry name" value="KINESIN_MOTOR_1"/>
    <property type="match status" value="1"/>
</dbReference>
<dbReference type="PROSITE" id="PS50067">
    <property type="entry name" value="KINESIN_MOTOR_2"/>
    <property type="match status" value="1"/>
</dbReference>
<dbReference type="PROSITE" id="PS50089">
    <property type="entry name" value="ZF_RING_2"/>
    <property type="match status" value="1"/>
</dbReference>
<name>KN7K_ORYSJ</name>
<evidence type="ECO:0000255" key="1"/>
<evidence type="ECO:0000255" key="2">
    <source>
        <dbReference type="PROSITE-ProRule" id="PRU00175"/>
    </source>
</evidence>
<evidence type="ECO:0000255" key="3">
    <source>
        <dbReference type="PROSITE-ProRule" id="PRU00283"/>
    </source>
</evidence>
<evidence type="ECO:0000256" key="4">
    <source>
        <dbReference type="SAM" id="MobiDB-lite"/>
    </source>
</evidence>
<evidence type="ECO:0000303" key="5">
    <source>
    </source>
</evidence>
<evidence type="ECO:0000305" key="6"/>
<evidence type="ECO:0000312" key="7">
    <source>
        <dbReference type="EMBL" id="AAG13527.1"/>
    </source>
</evidence>
<evidence type="ECO:0000312" key="8">
    <source>
        <dbReference type="EMBL" id="AAP54589.2"/>
    </source>
</evidence>
<evidence type="ECO:0000312" key="9">
    <source>
        <dbReference type="EMBL" id="BAT11636.1"/>
    </source>
</evidence>
<evidence type="ECO:0000312" key="10">
    <source>
        <dbReference type="EMBL" id="EAZ16667.1"/>
    </source>
</evidence>
<feature type="transit peptide" description="Chloroplast" evidence="1">
    <location>
        <begin position="1"/>
        <end position="48"/>
    </location>
</feature>
<feature type="chain" id="PRO_0000436632" description="Kinesin-like protein KIN-7K, chloroplastic">
    <location>
        <begin position="49"/>
        <end position="1059"/>
    </location>
</feature>
<feature type="domain" description="Kinesin motor" evidence="3">
    <location>
        <begin position="114"/>
        <end position="431"/>
    </location>
</feature>
<feature type="zinc finger region" description="RING-type" evidence="2">
    <location>
        <begin position="1013"/>
        <end position="1048"/>
    </location>
</feature>
<feature type="region of interest" description="Disordered" evidence="4">
    <location>
        <begin position="1"/>
        <end position="99"/>
    </location>
</feature>
<feature type="region of interest" description="Disordered" evidence="4">
    <location>
        <begin position="526"/>
        <end position="570"/>
    </location>
</feature>
<feature type="coiled-coil region" evidence="1">
    <location>
        <begin position="435"/>
        <end position="518"/>
    </location>
</feature>
<feature type="coiled-coil region" evidence="1">
    <location>
        <begin position="640"/>
        <end position="674"/>
    </location>
</feature>
<feature type="coiled-coil region" evidence="1">
    <location>
        <begin position="700"/>
        <end position="781"/>
    </location>
</feature>
<feature type="coiled-coil region" evidence="1">
    <location>
        <begin position="862"/>
        <end position="910"/>
    </location>
</feature>
<feature type="compositionally biased region" description="Low complexity" evidence="4">
    <location>
        <begin position="1"/>
        <end position="35"/>
    </location>
</feature>
<feature type="compositionally biased region" description="Low complexity" evidence="4">
    <location>
        <begin position="43"/>
        <end position="58"/>
    </location>
</feature>
<feature type="compositionally biased region" description="Gly residues" evidence="4">
    <location>
        <begin position="59"/>
        <end position="69"/>
    </location>
</feature>
<feature type="compositionally biased region" description="Low complexity" evidence="4">
    <location>
        <begin position="70"/>
        <end position="87"/>
    </location>
</feature>
<feature type="compositionally biased region" description="Pro residues" evidence="4">
    <location>
        <begin position="88"/>
        <end position="97"/>
    </location>
</feature>
<feature type="compositionally biased region" description="Polar residues" evidence="4">
    <location>
        <begin position="546"/>
        <end position="569"/>
    </location>
</feature>
<feature type="binding site" evidence="3">
    <location>
        <begin position="194"/>
        <end position="201"/>
    </location>
    <ligand>
        <name>ATP</name>
        <dbReference type="ChEBI" id="CHEBI:30616"/>
    </ligand>
</feature>
<accession>Q9FW70</accession>
<accession>A0A0P0XW69</accession>
<accession>A3C6F4</accession>
<accession>Q7XCW8</accession>